<proteinExistence type="inferred from homology"/>
<accession>P57611</accession>
<reference key="1">
    <citation type="journal article" date="2000" name="Nature">
        <title>Genome sequence of the endocellular bacterial symbiont of aphids Buchnera sp. APS.</title>
        <authorList>
            <person name="Shigenobu S."/>
            <person name="Watanabe H."/>
            <person name="Hattori M."/>
            <person name="Sakaki Y."/>
            <person name="Ishikawa H."/>
        </authorList>
    </citation>
    <scope>NUCLEOTIDE SEQUENCE [LARGE SCALE GENOMIC DNA]</scope>
    <source>
        <strain>APS</strain>
    </source>
</reference>
<sequence>MAKDKLYLNQINRLKIPPHSLEAEQSVLGGLMLDNEQWDSVSEHVVADDFFSKPHRLIFQEMQKLLDLGYPIDLITLSESLEQKGKLESVGRFSYLAELSKNTPSTANITAYADIVRERAIVREMILVANKIANAGYDTQGRKSEELLDYAESSVFKIAEKRFKKDSGPKNVEQILDETVASIEKLFLSPHDGVTGINTGYQDLNKKTSGLQRSELIIIAARPSMGKTTFAMNLCENAAMLYDKPVLIFSLEMPGEQIMMRMLASLSRVNQARIRTGQLNNEDWARISGTINILLKKKNIYIDDSSALTPSEVRSRARRIYRENNGLTLIMVDYLQLMRVPSLSENRTLEIAEISRTLKALAKELQVPVIALSQLNRSLEQRSDKRPVNSDLRESGSLEQDADLIMFIYRDEIYNENSDLKGIAEIIIGKQRNGPIGTVRLTFNGHWSRFDNYSGQKYD</sequence>
<feature type="chain" id="PRO_0000102016" description="Replicative DNA helicase DnaB">
    <location>
        <begin position="1"/>
        <end position="459"/>
    </location>
</feature>
<feature type="domain" description="SF4 helicase" evidence="2">
    <location>
        <begin position="190"/>
        <end position="457"/>
    </location>
</feature>
<feature type="binding site" evidence="2">
    <location>
        <begin position="221"/>
        <end position="228"/>
    </location>
    <ligand>
        <name>ATP</name>
        <dbReference type="ChEBI" id="CHEBI:30616"/>
    </ligand>
</feature>
<dbReference type="EC" id="5.6.2.3" evidence="1"/>
<dbReference type="EMBL" id="BA000003">
    <property type="protein sequence ID" value="BAB13238.1"/>
    <property type="molecule type" value="Genomic_DNA"/>
</dbReference>
<dbReference type="RefSeq" id="NP_240352.2">
    <property type="nucleotide sequence ID" value="NC_002528.1"/>
</dbReference>
<dbReference type="SMR" id="P57611"/>
<dbReference type="STRING" id="563178.BUAP5A_539"/>
<dbReference type="EnsemblBacteria" id="BAB13238">
    <property type="protein sequence ID" value="BAB13238"/>
    <property type="gene ID" value="BAB13238"/>
</dbReference>
<dbReference type="KEGG" id="buc:BU546"/>
<dbReference type="PATRIC" id="fig|107806.10.peg.550"/>
<dbReference type="eggNOG" id="COG0305">
    <property type="taxonomic scope" value="Bacteria"/>
</dbReference>
<dbReference type="HOGENOM" id="CLU_005373_0_0_6"/>
<dbReference type="Proteomes" id="UP000001806">
    <property type="component" value="Chromosome"/>
</dbReference>
<dbReference type="GO" id="GO:0005829">
    <property type="term" value="C:cytosol"/>
    <property type="evidence" value="ECO:0007669"/>
    <property type="project" value="TreeGrafter"/>
</dbReference>
<dbReference type="GO" id="GO:1990077">
    <property type="term" value="C:primosome complex"/>
    <property type="evidence" value="ECO:0007669"/>
    <property type="project" value="UniProtKB-KW"/>
</dbReference>
<dbReference type="GO" id="GO:0005524">
    <property type="term" value="F:ATP binding"/>
    <property type="evidence" value="ECO:0007669"/>
    <property type="project" value="UniProtKB-KW"/>
</dbReference>
<dbReference type="GO" id="GO:0016887">
    <property type="term" value="F:ATP hydrolysis activity"/>
    <property type="evidence" value="ECO:0007669"/>
    <property type="project" value="InterPro"/>
</dbReference>
<dbReference type="GO" id="GO:0003677">
    <property type="term" value="F:DNA binding"/>
    <property type="evidence" value="ECO:0007669"/>
    <property type="project" value="UniProtKB-KW"/>
</dbReference>
<dbReference type="GO" id="GO:0003678">
    <property type="term" value="F:DNA helicase activity"/>
    <property type="evidence" value="ECO:0007669"/>
    <property type="project" value="InterPro"/>
</dbReference>
<dbReference type="GO" id="GO:0006269">
    <property type="term" value="P:DNA replication, synthesis of primer"/>
    <property type="evidence" value="ECO:0007669"/>
    <property type="project" value="UniProtKB-KW"/>
</dbReference>
<dbReference type="CDD" id="cd00984">
    <property type="entry name" value="DnaB_C"/>
    <property type="match status" value="1"/>
</dbReference>
<dbReference type="FunFam" id="1.10.860.10:FF:000002">
    <property type="entry name" value="Replicative DNA helicase"/>
    <property type="match status" value="1"/>
</dbReference>
<dbReference type="FunFam" id="3.40.50.300:FF:000076">
    <property type="entry name" value="Replicative DNA helicase"/>
    <property type="match status" value="1"/>
</dbReference>
<dbReference type="Gene3D" id="1.10.860.10">
    <property type="entry name" value="DNAb Helicase, Chain A"/>
    <property type="match status" value="1"/>
</dbReference>
<dbReference type="Gene3D" id="3.40.50.300">
    <property type="entry name" value="P-loop containing nucleotide triphosphate hydrolases"/>
    <property type="match status" value="1"/>
</dbReference>
<dbReference type="InterPro" id="IPR003593">
    <property type="entry name" value="AAA+_ATPase"/>
</dbReference>
<dbReference type="InterPro" id="IPR036185">
    <property type="entry name" value="DNA_heli_DnaB-like_N_sf"/>
</dbReference>
<dbReference type="InterPro" id="IPR007692">
    <property type="entry name" value="DNA_helicase_DnaB"/>
</dbReference>
<dbReference type="InterPro" id="IPR007694">
    <property type="entry name" value="DNA_helicase_DnaB-like_C"/>
</dbReference>
<dbReference type="InterPro" id="IPR007693">
    <property type="entry name" value="DNA_helicase_DnaB-like_N"/>
</dbReference>
<dbReference type="InterPro" id="IPR016136">
    <property type="entry name" value="DNA_helicase_N/primase_C"/>
</dbReference>
<dbReference type="InterPro" id="IPR027417">
    <property type="entry name" value="P-loop_NTPase"/>
</dbReference>
<dbReference type="NCBIfam" id="TIGR00665">
    <property type="entry name" value="DnaB"/>
    <property type="match status" value="1"/>
</dbReference>
<dbReference type="NCBIfam" id="NF004384">
    <property type="entry name" value="PRK05748.1"/>
    <property type="match status" value="1"/>
</dbReference>
<dbReference type="PANTHER" id="PTHR30153:SF2">
    <property type="entry name" value="REPLICATIVE DNA HELICASE"/>
    <property type="match status" value="1"/>
</dbReference>
<dbReference type="PANTHER" id="PTHR30153">
    <property type="entry name" value="REPLICATIVE DNA HELICASE DNAB"/>
    <property type="match status" value="1"/>
</dbReference>
<dbReference type="Pfam" id="PF00772">
    <property type="entry name" value="DnaB"/>
    <property type="match status" value="1"/>
</dbReference>
<dbReference type="Pfam" id="PF03796">
    <property type="entry name" value="DnaB_C"/>
    <property type="match status" value="1"/>
</dbReference>
<dbReference type="SMART" id="SM00382">
    <property type="entry name" value="AAA"/>
    <property type="match status" value="1"/>
</dbReference>
<dbReference type="SUPFAM" id="SSF48024">
    <property type="entry name" value="N-terminal domain of DnaB helicase"/>
    <property type="match status" value="1"/>
</dbReference>
<dbReference type="SUPFAM" id="SSF52540">
    <property type="entry name" value="P-loop containing nucleoside triphosphate hydrolases"/>
    <property type="match status" value="1"/>
</dbReference>
<dbReference type="PROSITE" id="PS51199">
    <property type="entry name" value="SF4_HELICASE"/>
    <property type="match status" value="1"/>
</dbReference>
<evidence type="ECO:0000250" key="1">
    <source>
        <dbReference type="UniProtKB" id="P0ACB0"/>
    </source>
</evidence>
<evidence type="ECO:0000255" key="2">
    <source>
        <dbReference type="PROSITE-ProRule" id="PRU00596"/>
    </source>
</evidence>
<evidence type="ECO:0000305" key="3"/>
<keyword id="KW-0067">ATP-binding</keyword>
<keyword id="KW-0235">DNA replication</keyword>
<keyword id="KW-0238">DNA-binding</keyword>
<keyword id="KW-0347">Helicase</keyword>
<keyword id="KW-0378">Hydrolase</keyword>
<keyword id="KW-0413">Isomerase</keyword>
<keyword id="KW-0547">Nucleotide-binding</keyword>
<keyword id="KW-0639">Primosome</keyword>
<keyword id="KW-1185">Reference proteome</keyword>
<gene>
    <name type="primary">dnaB</name>
    <name type="ordered locus">BU546</name>
</gene>
<name>DNAB_BUCAI</name>
<organism>
    <name type="scientific">Buchnera aphidicola subsp. Acyrthosiphon pisum (strain APS)</name>
    <name type="common">Acyrthosiphon pisum symbiotic bacterium</name>
    <dbReference type="NCBI Taxonomy" id="107806"/>
    <lineage>
        <taxon>Bacteria</taxon>
        <taxon>Pseudomonadati</taxon>
        <taxon>Pseudomonadota</taxon>
        <taxon>Gammaproteobacteria</taxon>
        <taxon>Enterobacterales</taxon>
        <taxon>Erwiniaceae</taxon>
        <taxon>Buchnera</taxon>
    </lineage>
</organism>
<protein>
    <recommendedName>
        <fullName>Replicative DNA helicase DnaB</fullName>
        <ecNumber evidence="1">5.6.2.3</ecNumber>
    </recommendedName>
    <alternativeName>
        <fullName evidence="3">DNA 5'-3' helicase DnaB</fullName>
    </alternativeName>
</protein>
<comment type="function">
    <text evidence="1">The main replicative DNA helicase, it participates in initiation and elongation during chromosome replication. Travels ahead of the DNA replisome, separating dsDNA into templates for DNA synthesis. A processive ATP-dependent 5'-3' DNA helicase it has DNA-dependent ATPase activity.</text>
</comment>
<comment type="catalytic activity">
    <reaction evidence="1">
        <text>Couples ATP hydrolysis with the unwinding of duplex DNA at the replication fork by translocating in the 5'-3' direction. This creates two antiparallel DNA single strands (ssDNA). The leading ssDNA polymer is the template for DNA polymerase III holoenzyme which synthesizes a continuous strand.</text>
        <dbReference type="EC" id="5.6.2.3"/>
    </reaction>
</comment>
<comment type="catalytic activity">
    <reaction evidence="1">
        <text>ATP + H2O = ADP + phosphate + H(+)</text>
        <dbReference type="Rhea" id="RHEA:13065"/>
        <dbReference type="ChEBI" id="CHEBI:15377"/>
        <dbReference type="ChEBI" id="CHEBI:15378"/>
        <dbReference type="ChEBI" id="CHEBI:30616"/>
        <dbReference type="ChEBI" id="CHEBI:43474"/>
        <dbReference type="ChEBI" id="CHEBI:456216"/>
        <dbReference type="EC" id="5.6.2.3"/>
    </reaction>
</comment>
<comment type="subunit">
    <text evidence="1">Homohexamer.</text>
</comment>
<comment type="similarity">
    <text evidence="3">Belongs to the helicase family. DnaB subfamily.</text>
</comment>